<accession>O08328</accession>
<organism>
    <name type="scientific">Geobacillus stearothermophilus</name>
    <name type="common">Bacillus stearothermophilus</name>
    <dbReference type="NCBI Taxonomy" id="1422"/>
    <lineage>
        <taxon>Bacteria</taxon>
        <taxon>Bacillati</taxon>
        <taxon>Bacillota</taxon>
        <taxon>Bacilli</taxon>
        <taxon>Bacillales</taxon>
        <taxon>Anoxybacillaceae</taxon>
        <taxon>Geobacillus</taxon>
    </lineage>
</organism>
<name>GLGA_GEOSE</name>
<keyword id="KW-0320">Glycogen biosynthesis</keyword>
<keyword id="KW-0328">Glycosyltransferase</keyword>
<keyword id="KW-0808">Transferase</keyword>
<comment type="function">
    <text evidence="1">Synthesizes alpha-1,4-glucan chains using ADP-glucose.</text>
</comment>
<comment type="catalytic activity">
    <reaction>
        <text>[(1-&gt;4)-alpha-D-glucosyl](n) + ADP-alpha-D-glucose = [(1-&gt;4)-alpha-D-glucosyl](n+1) + ADP + H(+)</text>
        <dbReference type="Rhea" id="RHEA:18189"/>
        <dbReference type="Rhea" id="RHEA-COMP:9584"/>
        <dbReference type="Rhea" id="RHEA-COMP:9587"/>
        <dbReference type="ChEBI" id="CHEBI:15378"/>
        <dbReference type="ChEBI" id="CHEBI:15444"/>
        <dbReference type="ChEBI" id="CHEBI:57498"/>
        <dbReference type="ChEBI" id="CHEBI:456216"/>
        <dbReference type="EC" id="2.4.1.21"/>
    </reaction>
</comment>
<comment type="pathway">
    <text>Glycan biosynthesis; glycogen biosynthesis.</text>
</comment>
<comment type="similarity">
    <text evidence="2">Belongs to the glycosyltransferase 1 family. Bacterial/plant glycogen synthase subfamily.</text>
</comment>
<proteinExistence type="inferred from homology"/>
<feature type="chain" id="PRO_0000188596" description="Glycogen synthase">
    <location>
        <begin position="1"/>
        <end position="485"/>
    </location>
</feature>
<feature type="binding site" evidence="1">
    <location>
        <position position="15"/>
    </location>
    <ligand>
        <name>ADP-alpha-D-glucose</name>
        <dbReference type="ChEBI" id="CHEBI:57498"/>
    </ligand>
</feature>
<dbReference type="EC" id="2.4.1.21"/>
<dbReference type="EMBL" id="D87026">
    <property type="protein sequence ID" value="BAA19591.1"/>
    <property type="molecule type" value="Genomic_DNA"/>
</dbReference>
<dbReference type="SMR" id="O08328"/>
<dbReference type="CAZy" id="GT5">
    <property type="family name" value="Glycosyltransferase Family 5"/>
</dbReference>
<dbReference type="UniPathway" id="UPA00164"/>
<dbReference type="GO" id="GO:0009011">
    <property type="term" value="F:alpha-1,4-glucan glucosyltransferase (ADP-glucose donor) activity"/>
    <property type="evidence" value="ECO:0007669"/>
    <property type="project" value="UniProtKB-UniRule"/>
</dbReference>
<dbReference type="GO" id="GO:0004373">
    <property type="term" value="F:alpha-1,4-glucan glucosyltransferase (UDP-glucose donor) activity"/>
    <property type="evidence" value="ECO:0007669"/>
    <property type="project" value="InterPro"/>
</dbReference>
<dbReference type="GO" id="GO:0005978">
    <property type="term" value="P:glycogen biosynthetic process"/>
    <property type="evidence" value="ECO:0007669"/>
    <property type="project" value="UniProtKB-UniRule"/>
</dbReference>
<dbReference type="CDD" id="cd03791">
    <property type="entry name" value="GT5_Glycogen_synthase_DULL1-like"/>
    <property type="match status" value="1"/>
</dbReference>
<dbReference type="Gene3D" id="3.40.50.2000">
    <property type="entry name" value="Glycogen Phosphorylase B"/>
    <property type="match status" value="2"/>
</dbReference>
<dbReference type="HAMAP" id="MF_00484">
    <property type="entry name" value="Glycogen_synth"/>
    <property type="match status" value="1"/>
</dbReference>
<dbReference type="InterPro" id="IPR001296">
    <property type="entry name" value="Glyco_trans_1"/>
</dbReference>
<dbReference type="InterPro" id="IPR011835">
    <property type="entry name" value="GS/SS"/>
</dbReference>
<dbReference type="InterPro" id="IPR013534">
    <property type="entry name" value="Starch_synth_cat_dom"/>
</dbReference>
<dbReference type="NCBIfam" id="TIGR02095">
    <property type="entry name" value="glgA"/>
    <property type="match status" value="1"/>
</dbReference>
<dbReference type="NCBIfam" id="NF001898">
    <property type="entry name" value="PRK00654.1-1"/>
    <property type="match status" value="1"/>
</dbReference>
<dbReference type="NCBIfam" id="NF001899">
    <property type="entry name" value="PRK00654.1-2"/>
    <property type="match status" value="1"/>
</dbReference>
<dbReference type="PANTHER" id="PTHR45825:SF11">
    <property type="entry name" value="ALPHA AMYLASE DOMAIN-CONTAINING PROTEIN"/>
    <property type="match status" value="1"/>
</dbReference>
<dbReference type="PANTHER" id="PTHR45825">
    <property type="entry name" value="GRANULE-BOUND STARCH SYNTHASE 1, CHLOROPLASTIC/AMYLOPLASTIC"/>
    <property type="match status" value="1"/>
</dbReference>
<dbReference type="Pfam" id="PF08323">
    <property type="entry name" value="Glyco_transf_5"/>
    <property type="match status" value="1"/>
</dbReference>
<dbReference type="Pfam" id="PF00534">
    <property type="entry name" value="Glycos_transf_1"/>
    <property type="match status" value="1"/>
</dbReference>
<dbReference type="SUPFAM" id="SSF53756">
    <property type="entry name" value="UDP-Glycosyltransferase/glycogen phosphorylase"/>
    <property type="match status" value="1"/>
</dbReference>
<reference key="1">
    <citation type="journal article" date="1997" name="J. Bacteriol.">
        <title>Characterization of a gene cluster for glycogen biosynthesis and a heterotetrameric ADP-glucose pyrophosphorylase from Bacillus stearothermophilus.</title>
        <authorList>
            <person name="Takata H."/>
            <person name="Takaha T."/>
            <person name="Okada S."/>
            <person name="Takagi M."/>
            <person name="Imanaka T."/>
        </authorList>
    </citation>
    <scope>NUCLEOTIDE SEQUENCE [GENOMIC DNA]</scope>
    <source>
        <strain>TRBE14</strain>
    </source>
</reference>
<protein>
    <recommendedName>
        <fullName>Glycogen synthase</fullName>
        <ecNumber>2.4.1.21</ecNumber>
    </recommendedName>
    <alternativeName>
        <fullName>Starch [bacterial glycogen] synthase</fullName>
    </alternativeName>
</protein>
<evidence type="ECO:0000250" key="1"/>
<evidence type="ECO:0000305" key="2"/>
<gene>
    <name type="primary">glgA</name>
</gene>
<sequence>MKVLFAVSECAPFAKSGGLADVAGALPKELRRLGIDARVMLPKYETIAPEWKKKMKKVAELIVPVGWRRQYCGVEELRHDGVIYYFIDNEYYFKRPQLYGHYDDGERFAYFCRAVLEVLPEIQFQPDVIHCHDWHTGMVPFLLREQYRHELFYVDMRTVFTIHNLQFQGLFPRGILEDLLNLDGRYFTVDHLEFYGCVSFMKGALVASDLITTVSPTYKEEIQTAYYGERLDGLLRARRDDLLGILNGIDDEFYNPEADPFLTATYSVHTRERKQLNKRALQRQFGLPEWDDVPLIAMVTRMTAQKGLDLVTCVFHEMMSEDMQLVVLGTGDWRFEQFFSQMAAAYPGKVGVYIGFHEPLAHQIYAGADLFLIPSLFEPCGLSQMIALRYGTIPIVRETGGLNDTVQSYNEITKEGNGFSFTNFNAHDMLYTIRRALSFYRQPSVWEQLTERAMRGDYSWRRSANQYKQAYEQLIKKEEHTLVHG</sequence>